<keyword id="KW-0012">Acyltransferase</keyword>
<keyword id="KW-0025">Alternative splicing</keyword>
<keyword id="KW-0256">Endoplasmic reticulum</keyword>
<keyword id="KW-0444">Lipid biosynthesis</keyword>
<keyword id="KW-0443">Lipid metabolism</keyword>
<keyword id="KW-0472">Membrane</keyword>
<keyword id="KW-0594">Phospholipid biosynthesis</keyword>
<keyword id="KW-1208">Phospholipid metabolism</keyword>
<keyword id="KW-0597">Phosphoprotein</keyword>
<keyword id="KW-1267">Proteomics identification</keyword>
<keyword id="KW-1185">Reference proteome</keyword>
<keyword id="KW-0808">Transferase</keyword>
<keyword id="KW-0812">Transmembrane</keyword>
<keyword id="KW-1133">Transmembrane helix</keyword>
<comment type="function">
    <text evidence="2 4">Acyltransferase which catalyzes the transfer of an acyl group from an acyl-CoA towards a lysophospholipid producing a phospholipid and participates in the reacylation step of the phospholipid remodeling pathway also known as the Lands cycle (PubMed:18772128). Acts on lysophosphatidylserine (1-acyl-2-hydroxy-sn-glycero-3-phospho-L-serine or LPS) and lysophosphatidylethanolamine (1-acyl-sn-glycero-3-phosphoethanolamine or LPE), and to a lesser extend lysophosphatidylcholine (PubMed:18772128). Prefers oleoyl-CoA as the acyl donor and 1-oleoyl-LPE as acceptor (PubMed:18772128). May play a role in neurite outgrowth during neuronal differentiation (By similarity).</text>
</comment>
<comment type="catalytic activity">
    <reaction evidence="4">
        <text>a 1-acyl-sn-glycero-3-phospho-L-serine + an acyl-CoA = a 1,2-diacyl-sn-glycero-3-phospho-L-serine + CoA</text>
        <dbReference type="Rhea" id="RHEA:33191"/>
        <dbReference type="ChEBI" id="CHEBI:57262"/>
        <dbReference type="ChEBI" id="CHEBI:57287"/>
        <dbReference type="ChEBI" id="CHEBI:58342"/>
        <dbReference type="ChEBI" id="CHEBI:64379"/>
        <dbReference type="EC" id="2.3.1.n6"/>
    </reaction>
    <physiologicalReaction direction="left-to-right" evidence="4">
        <dbReference type="Rhea" id="RHEA:33192"/>
    </physiologicalReaction>
</comment>
<comment type="catalytic activity">
    <reaction evidence="4">
        <text>a 1-acyl-sn-glycero-3-phosphocholine + an acyl-CoA = a 1,2-diacyl-sn-glycero-3-phosphocholine + CoA</text>
        <dbReference type="Rhea" id="RHEA:12937"/>
        <dbReference type="ChEBI" id="CHEBI:57287"/>
        <dbReference type="ChEBI" id="CHEBI:57643"/>
        <dbReference type="ChEBI" id="CHEBI:58168"/>
        <dbReference type="ChEBI" id="CHEBI:58342"/>
        <dbReference type="EC" id="2.3.1.23"/>
    </reaction>
    <physiologicalReaction direction="left-to-right" evidence="4">
        <dbReference type="Rhea" id="RHEA:12938"/>
    </physiologicalReaction>
</comment>
<comment type="catalytic activity">
    <reaction evidence="2">
        <text>a 1-acyl-sn-glycero-3-phosphoethanolamine + an acyl-CoA = a 1,2-diacyl-sn-glycero-3-phosphoethanolamine + CoA</text>
        <dbReference type="Rhea" id="RHEA:32995"/>
        <dbReference type="ChEBI" id="CHEBI:57287"/>
        <dbReference type="ChEBI" id="CHEBI:58342"/>
        <dbReference type="ChEBI" id="CHEBI:64381"/>
        <dbReference type="ChEBI" id="CHEBI:64612"/>
        <dbReference type="EC" id="2.3.1.n7"/>
    </reaction>
    <physiologicalReaction direction="left-to-right" evidence="2">
        <dbReference type="Rhea" id="RHEA:32996"/>
    </physiologicalReaction>
</comment>
<comment type="catalytic activity">
    <reaction evidence="4">
        <text>1-(9Z-octadecenoyl)-sn-glycero-3-phospho-L-serine + (9Z)-octadecenoyl-CoA = 1,2-di-(9Z)-octadecenoyl-sn-glycero-3-phospho-L-serine + CoA</text>
        <dbReference type="Rhea" id="RHEA:37407"/>
        <dbReference type="ChEBI" id="CHEBI:57287"/>
        <dbReference type="ChEBI" id="CHEBI:57387"/>
        <dbReference type="ChEBI" id="CHEBI:74617"/>
        <dbReference type="ChEBI" id="CHEBI:74905"/>
    </reaction>
    <physiologicalReaction direction="left-to-right" evidence="4">
        <dbReference type="Rhea" id="RHEA:37408"/>
    </physiologicalReaction>
</comment>
<comment type="catalytic activity">
    <reaction evidence="4">
        <text>1-(9Z-octadecenoyl)-sn-glycero-3-phospho-L-serine + octadecanoyl-CoA = 1-(9Z-octadecenoyl)-2-octadecanoyl-sn-glycero-3-phospho-L-serine + CoA</text>
        <dbReference type="Rhea" id="RHEA:37403"/>
        <dbReference type="ChEBI" id="CHEBI:57287"/>
        <dbReference type="ChEBI" id="CHEBI:57394"/>
        <dbReference type="ChEBI" id="CHEBI:74617"/>
        <dbReference type="ChEBI" id="CHEBI:74902"/>
    </reaction>
    <physiologicalReaction direction="left-to-right" evidence="4">
        <dbReference type="Rhea" id="RHEA:37404"/>
    </physiologicalReaction>
</comment>
<comment type="catalytic activity">
    <reaction evidence="4">
        <text>1-(9Z-octadecenoyl)-sn-glycero-3-phospho-L-serine + (9Z)-hexadecenoyl-CoA = 1-(9Z-octadecenoyl)-2-(9Z-hexadecenoyl)-sn-glycero-3-phospho-L-serine + CoA</text>
        <dbReference type="Rhea" id="RHEA:37399"/>
        <dbReference type="ChEBI" id="CHEBI:57287"/>
        <dbReference type="ChEBI" id="CHEBI:61540"/>
        <dbReference type="ChEBI" id="CHEBI:74617"/>
        <dbReference type="ChEBI" id="CHEBI:74901"/>
    </reaction>
    <physiologicalReaction direction="left-to-right" evidence="4">
        <dbReference type="Rhea" id="RHEA:37400"/>
    </physiologicalReaction>
</comment>
<comment type="catalytic activity">
    <reaction evidence="4">
        <text>1-(9Z-octadecenoyl)-sn-glycero-3-phospho-L-serine + (9Z,12Z)-octadecadienoyl-CoA = 1-(9Z-octadecenoyl)-2-(9Z,12Z-octadienoyl)-sn-glycero-3-phospho-L-serine + CoA</text>
        <dbReference type="Rhea" id="RHEA:37375"/>
        <dbReference type="ChEBI" id="CHEBI:57287"/>
        <dbReference type="ChEBI" id="CHEBI:57383"/>
        <dbReference type="ChEBI" id="CHEBI:74617"/>
        <dbReference type="ChEBI" id="CHEBI:74892"/>
    </reaction>
    <physiologicalReaction direction="left-to-right" evidence="4">
        <dbReference type="Rhea" id="RHEA:37376"/>
    </physiologicalReaction>
</comment>
<comment type="catalytic activity">
    <reaction evidence="4">
        <text>1-hexadecanoyl-sn-glycero-3-phosphocholine + (9Z)-octadecenoyl-CoA = 1-hexadecanoyl-2-(9Z-octadecenoyl)-sn-glycero-3-phosphocholine + CoA</text>
        <dbReference type="Rhea" id="RHEA:35991"/>
        <dbReference type="ChEBI" id="CHEBI:57287"/>
        <dbReference type="ChEBI" id="CHEBI:57387"/>
        <dbReference type="ChEBI" id="CHEBI:72998"/>
        <dbReference type="ChEBI" id="CHEBI:73001"/>
    </reaction>
    <physiologicalReaction direction="left-to-right" evidence="4">
        <dbReference type="Rhea" id="RHEA:35992"/>
    </physiologicalReaction>
</comment>
<comment type="catalytic activity">
    <reaction evidence="2">
        <text>a 1-O-(1Z-alkenyl)-sn-glycero-3-phosphoethanolamine + (9Z)-octadecenoyl-CoA = 1-O-(1Z)-alkenyl-2-(9Z)-octadecenoyl-sn-glycero-3-phosphoethanolamine + CoA</text>
        <dbReference type="Rhea" id="RHEA:37631"/>
        <dbReference type="ChEBI" id="CHEBI:57287"/>
        <dbReference type="ChEBI" id="CHEBI:57387"/>
        <dbReference type="ChEBI" id="CHEBI:77288"/>
        <dbReference type="ChEBI" id="CHEBI:77291"/>
    </reaction>
    <physiologicalReaction direction="left-to-right" evidence="2">
        <dbReference type="Rhea" id="RHEA:37632"/>
    </physiologicalReaction>
</comment>
<comment type="catalytic activity">
    <reaction evidence="2">
        <text>1-octadecanoyl-sn-glycero-3-phosphoethanolamine + (9Z)-octadecenoyl-CoA = 1-octadecanoyl-2-(9Z-octadecenoyl)-sn-glycero-3-phosphoethanolamine + CoA</text>
        <dbReference type="Rhea" id="RHEA:37523"/>
        <dbReference type="ChEBI" id="CHEBI:57287"/>
        <dbReference type="ChEBI" id="CHEBI:57387"/>
        <dbReference type="ChEBI" id="CHEBI:75036"/>
        <dbReference type="ChEBI" id="CHEBI:75038"/>
    </reaction>
    <physiologicalReaction direction="left-to-right" evidence="2">
        <dbReference type="Rhea" id="RHEA:37524"/>
    </physiologicalReaction>
</comment>
<comment type="catalytic activity">
    <reaction evidence="2">
        <text>1-(9Z-octadecenoyl)-sn-glycero-3-phosphoethanolamine + (9Z)-octadecenoyl-CoA = 1,2-di-(9Z-octadecenoyl)-sn-glycero-3-phosphoethanolamine + CoA</text>
        <dbReference type="Rhea" id="RHEA:37499"/>
        <dbReference type="ChEBI" id="CHEBI:57287"/>
        <dbReference type="ChEBI" id="CHEBI:57387"/>
        <dbReference type="ChEBI" id="CHEBI:74971"/>
        <dbReference type="ChEBI" id="CHEBI:74986"/>
    </reaction>
    <physiologicalReaction direction="left-to-right" evidence="2">
        <dbReference type="Rhea" id="RHEA:37500"/>
    </physiologicalReaction>
</comment>
<comment type="catalytic activity">
    <reaction evidence="2">
        <text>1-hexadecanoyl-sn-glycero-3-phosphoethanolamine + (9Z)-octadecenoyl-CoA = 1-hexadecanoyl-2-(9Z-octadecenoyl)-sn-glycero-3-phosphoethanolamine + CoA</text>
        <dbReference type="Rhea" id="RHEA:36015"/>
        <dbReference type="ChEBI" id="CHEBI:57287"/>
        <dbReference type="ChEBI" id="CHEBI:57387"/>
        <dbReference type="ChEBI" id="CHEBI:73004"/>
        <dbReference type="ChEBI" id="CHEBI:73007"/>
    </reaction>
    <physiologicalReaction direction="left-to-right" evidence="2">
        <dbReference type="Rhea" id="RHEA:36016"/>
    </physiologicalReaction>
</comment>
<comment type="catalytic activity">
    <reaction evidence="2">
        <text>1-(10Z-heptadecenoyl)-sn-glycero-3-phosphoethanolamine + hexadecanoyl-CoA = 1-(10Z-heptadecenoyl)-2-hexadecanoyl-sn-glycero-3-phosphoethanolamine + CoA</text>
        <dbReference type="Rhea" id="RHEA:65128"/>
        <dbReference type="ChEBI" id="CHEBI:57287"/>
        <dbReference type="ChEBI" id="CHEBI:57379"/>
        <dbReference type="ChEBI" id="CHEBI:149768"/>
        <dbReference type="ChEBI" id="CHEBI:156345"/>
    </reaction>
    <physiologicalReaction direction="left-to-right" evidence="2">
        <dbReference type="Rhea" id="RHEA:65129"/>
    </physiologicalReaction>
</comment>
<comment type="catalytic activity">
    <reaction evidence="2">
        <text>1-(10Z-heptadecenoyl)-sn-glycero-3-phosphoethanolamine + (9Z)-octadecenoyl-CoA = 1-(10Z-heptadecenoyl)-2-(9Z-octadecenoyl)-sn-glycero-3-phosphoethanolamine + CoA</text>
        <dbReference type="Rhea" id="RHEA:65136"/>
        <dbReference type="ChEBI" id="CHEBI:57287"/>
        <dbReference type="ChEBI" id="CHEBI:57387"/>
        <dbReference type="ChEBI" id="CHEBI:149768"/>
        <dbReference type="ChEBI" id="CHEBI:156344"/>
    </reaction>
    <physiologicalReaction direction="left-to-right" evidence="2">
        <dbReference type="Rhea" id="RHEA:65137"/>
    </physiologicalReaction>
</comment>
<comment type="activity regulation">
    <text>Partially inhibited by thimerosal.</text>
</comment>
<comment type="pathway">
    <text evidence="4">Lipid metabolism; phospholipid metabolism.</text>
</comment>
<comment type="subcellular location">
    <subcellularLocation>
        <location evidence="2">Endoplasmic reticulum membrane</location>
        <topology evidence="3">Multi-pass membrane protein</topology>
    </subcellularLocation>
</comment>
<comment type="alternative products">
    <event type="alternative splicing"/>
    <isoform>
        <id>Q6ZNC8-1</id>
        <name>1</name>
        <sequence type="displayed"/>
    </isoform>
    <isoform>
        <id>Q6ZNC8-2</id>
        <name>2</name>
        <sequence type="described" ref="VSP_036729"/>
    </isoform>
    <isoform>
        <id>Q6ZNC8-3</id>
        <name>3</name>
        <sequence type="described" ref="VSP_036730 VSP_036731"/>
    </isoform>
</comment>
<comment type="tissue specificity">
    <text evidence="4">Expressed in neutrophils.</text>
</comment>
<comment type="similarity">
    <text evidence="6">Belongs to the membrane-bound acyltransferase family.</text>
</comment>
<protein>
    <recommendedName>
        <fullName evidence="7">Membrane-bound glycerophospholipid O-acyltransferase 1</fullName>
        <ecNumber>2.3.1.-</ecNumber>
    </recommendedName>
    <alternativeName>
        <fullName>1-acylglycerophosphocholine O-acyltransferase</fullName>
        <ecNumber evidence="4">2.3.1.23</ecNumber>
    </alternativeName>
    <alternativeName>
        <fullName evidence="2">1-acylglycerophosphoethanolamine O-acyltransferase</fullName>
        <ecNumber evidence="2">2.3.1.n7</ecNumber>
    </alternativeName>
    <alternativeName>
        <fullName evidence="6">1-acylglycerophosphoserine O-acyltransferase</fullName>
        <ecNumber evidence="4">2.3.1.n6</ecNumber>
    </alternativeName>
    <alternativeName>
        <fullName>Lysophosphatidylserine acyltransferase</fullName>
        <shortName>LPSAT</shortName>
        <shortName>Lyso-PS acyltransferase</shortName>
    </alternativeName>
    <alternativeName>
        <fullName evidence="6">Lysophospholipid acyltransferase 1</fullName>
        <shortName>LPLAT 1</shortName>
    </alternativeName>
    <alternativeName>
        <fullName>Membrane-bound O-acyltransferase domain-containing protein 1</fullName>
        <shortName>O-acyltransferase domain-containing protein 1</shortName>
    </alternativeName>
</protein>
<name>MBOA1_HUMAN</name>
<gene>
    <name evidence="7" type="primary">MBOAT1</name>
    <name type="synonym">OACT1</name>
</gene>
<proteinExistence type="evidence at protein level"/>
<organism>
    <name type="scientific">Homo sapiens</name>
    <name type="common">Human</name>
    <dbReference type="NCBI Taxonomy" id="9606"/>
    <lineage>
        <taxon>Eukaryota</taxon>
        <taxon>Metazoa</taxon>
        <taxon>Chordata</taxon>
        <taxon>Craniata</taxon>
        <taxon>Vertebrata</taxon>
        <taxon>Euteleostomi</taxon>
        <taxon>Mammalia</taxon>
        <taxon>Eutheria</taxon>
        <taxon>Euarchontoglires</taxon>
        <taxon>Primates</taxon>
        <taxon>Haplorrhini</taxon>
        <taxon>Catarrhini</taxon>
        <taxon>Hominidae</taxon>
        <taxon>Homo</taxon>
    </lineage>
</organism>
<reference key="1">
    <citation type="journal article" date="2007" name="J. Biol. Chem.">
        <title>LPT1 encodes a membrane-bound O-acyltransferase involved in the acylation of lysophospholipids in the yeast Saccharomyces cerevisiae.</title>
        <authorList>
            <person name="Tamaki H."/>
            <person name="Shimada A."/>
            <person name="Itoh Y."/>
            <person name="Ohya M."/>
            <person name="Takase J."/>
            <person name="Miyashita M."/>
            <person name="Miyagawa H."/>
            <person name="Nozaki H."/>
            <person name="Nakayama R."/>
            <person name="Kumagai H."/>
        </authorList>
    </citation>
    <scope>NUCLEOTIDE SEQUENCE [MRNA] (ISOFORM 1)</scope>
</reference>
<reference key="2">
    <citation type="journal article" date="2004" name="Nat. Genet.">
        <title>Complete sequencing and characterization of 21,243 full-length human cDNAs.</title>
        <authorList>
            <person name="Ota T."/>
            <person name="Suzuki Y."/>
            <person name="Nishikawa T."/>
            <person name="Otsuki T."/>
            <person name="Sugiyama T."/>
            <person name="Irie R."/>
            <person name="Wakamatsu A."/>
            <person name="Hayashi K."/>
            <person name="Sato H."/>
            <person name="Nagai K."/>
            <person name="Kimura K."/>
            <person name="Makita H."/>
            <person name="Sekine M."/>
            <person name="Obayashi M."/>
            <person name="Nishi T."/>
            <person name="Shibahara T."/>
            <person name="Tanaka T."/>
            <person name="Ishii S."/>
            <person name="Yamamoto J."/>
            <person name="Saito K."/>
            <person name="Kawai Y."/>
            <person name="Isono Y."/>
            <person name="Nakamura Y."/>
            <person name="Nagahari K."/>
            <person name="Murakami K."/>
            <person name="Yasuda T."/>
            <person name="Iwayanagi T."/>
            <person name="Wagatsuma M."/>
            <person name="Shiratori A."/>
            <person name="Sudo H."/>
            <person name="Hosoiri T."/>
            <person name="Kaku Y."/>
            <person name="Kodaira H."/>
            <person name="Kondo H."/>
            <person name="Sugawara M."/>
            <person name="Takahashi M."/>
            <person name="Kanda K."/>
            <person name="Yokoi T."/>
            <person name="Furuya T."/>
            <person name="Kikkawa E."/>
            <person name="Omura Y."/>
            <person name="Abe K."/>
            <person name="Kamihara K."/>
            <person name="Katsuta N."/>
            <person name="Sato K."/>
            <person name="Tanikawa M."/>
            <person name="Yamazaki M."/>
            <person name="Ninomiya K."/>
            <person name="Ishibashi T."/>
            <person name="Yamashita H."/>
            <person name="Murakawa K."/>
            <person name="Fujimori K."/>
            <person name="Tanai H."/>
            <person name="Kimata M."/>
            <person name="Watanabe M."/>
            <person name="Hiraoka S."/>
            <person name="Chiba Y."/>
            <person name="Ishida S."/>
            <person name="Ono Y."/>
            <person name="Takiguchi S."/>
            <person name="Watanabe S."/>
            <person name="Yosida M."/>
            <person name="Hotuta T."/>
            <person name="Kusano J."/>
            <person name="Kanehori K."/>
            <person name="Takahashi-Fujii A."/>
            <person name="Hara H."/>
            <person name="Tanase T.-O."/>
            <person name="Nomura Y."/>
            <person name="Togiya S."/>
            <person name="Komai F."/>
            <person name="Hara R."/>
            <person name="Takeuchi K."/>
            <person name="Arita M."/>
            <person name="Imose N."/>
            <person name="Musashino K."/>
            <person name="Yuuki H."/>
            <person name="Oshima A."/>
            <person name="Sasaki N."/>
            <person name="Aotsuka S."/>
            <person name="Yoshikawa Y."/>
            <person name="Matsunawa H."/>
            <person name="Ichihara T."/>
            <person name="Shiohata N."/>
            <person name="Sano S."/>
            <person name="Moriya S."/>
            <person name="Momiyama H."/>
            <person name="Satoh N."/>
            <person name="Takami S."/>
            <person name="Terashima Y."/>
            <person name="Suzuki O."/>
            <person name="Nakagawa S."/>
            <person name="Senoh A."/>
            <person name="Mizoguchi H."/>
            <person name="Goto Y."/>
            <person name="Shimizu F."/>
            <person name="Wakebe H."/>
            <person name="Hishigaki H."/>
            <person name="Watanabe T."/>
            <person name="Sugiyama A."/>
            <person name="Takemoto M."/>
            <person name="Kawakami B."/>
            <person name="Yamazaki M."/>
            <person name="Watanabe K."/>
            <person name="Kumagai A."/>
            <person name="Itakura S."/>
            <person name="Fukuzumi Y."/>
            <person name="Fujimori Y."/>
            <person name="Komiyama M."/>
            <person name="Tashiro H."/>
            <person name="Tanigami A."/>
            <person name="Fujiwara T."/>
            <person name="Ono T."/>
            <person name="Yamada K."/>
            <person name="Fujii Y."/>
            <person name="Ozaki K."/>
            <person name="Hirao M."/>
            <person name="Ohmori Y."/>
            <person name="Kawabata A."/>
            <person name="Hikiji T."/>
            <person name="Kobatake N."/>
            <person name="Inagaki H."/>
            <person name="Ikema Y."/>
            <person name="Okamoto S."/>
            <person name="Okitani R."/>
            <person name="Kawakami T."/>
            <person name="Noguchi S."/>
            <person name="Itoh T."/>
            <person name="Shigeta K."/>
            <person name="Senba T."/>
            <person name="Matsumura K."/>
            <person name="Nakajima Y."/>
            <person name="Mizuno T."/>
            <person name="Morinaga M."/>
            <person name="Sasaki M."/>
            <person name="Togashi T."/>
            <person name="Oyama M."/>
            <person name="Hata H."/>
            <person name="Watanabe M."/>
            <person name="Komatsu T."/>
            <person name="Mizushima-Sugano J."/>
            <person name="Satoh T."/>
            <person name="Shirai Y."/>
            <person name="Takahashi Y."/>
            <person name="Nakagawa K."/>
            <person name="Okumura K."/>
            <person name="Nagase T."/>
            <person name="Nomura N."/>
            <person name="Kikuchi H."/>
            <person name="Masuho Y."/>
            <person name="Yamashita R."/>
            <person name="Nakai K."/>
            <person name="Yada T."/>
            <person name="Nakamura Y."/>
            <person name="Ohara O."/>
            <person name="Isogai T."/>
            <person name="Sugano S."/>
        </authorList>
    </citation>
    <scope>NUCLEOTIDE SEQUENCE [LARGE SCALE MRNA] (ISOFORMS 1; 2 AND 3)</scope>
    <source>
        <tissue>Tongue</tissue>
        <tissue>Uterus</tissue>
    </source>
</reference>
<reference key="3">
    <citation type="journal article" date="2003" name="Nature">
        <title>The DNA sequence and analysis of human chromosome 6.</title>
        <authorList>
            <person name="Mungall A.J."/>
            <person name="Palmer S.A."/>
            <person name="Sims S.K."/>
            <person name="Edwards C.A."/>
            <person name="Ashurst J.L."/>
            <person name="Wilming L."/>
            <person name="Jones M.C."/>
            <person name="Horton R."/>
            <person name="Hunt S.E."/>
            <person name="Scott C.E."/>
            <person name="Gilbert J.G.R."/>
            <person name="Clamp M.E."/>
            <person name="Bethel G."/>
            <person name="Milne S."/>
            <person name="Ainscough R."/>
            <person name="Almeida J.P."/>
            <person name="Ambrose K.D."/>
            <person name="Andrews T.D."/>
            <person name="Ashwell R.I.S."/>
            <person name="Babbage A.K."/>
            <person name="Bagguley C.L."/>
            <person name="Bailey J."/>
            <person name="Banerjee R."/>
            <person name="Barker D.J."/>
            <person name="Barlow K.F."/>
            <person name="Bates K."/>
            <person name="Beare D.M."/>
            <person name="Beasley H."/>
            <person name="Beasley O."/>
            <person name="Bird C.P."/>
            <person name="Blakey S.E."/>
            <person name="Bray-Allen S."/>
            <person name="Brook J."/>
            <person name="Brown A.J."/>
            <person name="Brown J.Y."/>
            <person name="Burford D.C."/>
            <person name="Burrill W."/>
            <person name="Burton J."/>
            <person name="Carder C."/>
            <person name="Carter N.P."/>
            <person name="Chapman J.C."/>
            <person name="Clark S.Y."/>
            <person name="Clark G."/>
            <person name="Clee C.M."/>
            <person name="Clegg S."/>
            <person name="Cobley V."/>
            <person name="Collier R.E."/>
            <person name="Collins J.E."/>
            <person name="Colman L.K."/>
            <person name="Corby N.R."/>
            <person name="Coville G.J."/>
            <person name="Culley K.M."/>
            <person name="Dhami P."/>
            <person name="Davies J."/>
            <person name="Dunn M."/>
            <person name="Earthrowl M.E."/>
            <person name="Ellington A.E."/>
            <person name="Evans K.A."/>
            <person name="Faulkner L."/>
            <person name="Francis M.D."/>
            <person name="Frankish A."/>
            <person name="Frankland J."/>
            <person name="French L."/>
            <person name="Garner P."/>
            <person name="Garnett J."/>
            <person name="Ghori M.J."/>
            <person name="Gilby L.M."/>
            <person name="Gillson C.J."/>
            <person name="Glithero R.J."/>
            <person name="Grafham D.V."/>
            <person name="Grant M."/>
            <person name="Gribble S."/>
            <person name="Griffiths C."/>
            <person name="Griffiths M.N.D."/>
            <person name="Hall R."/>
            <person name="Halls K.S."/>
            <person name="Hammond S."/>
            <person name="Harley J.L."/>
            <person name="Hart E.A."/>
            <person name="Heath P.D."/>
            <person name="Heathcott R."/>
            <person name="Holmes S.J."/>
            <person name="Howden P.J."/>
            <person name="Howe K.L."/>
            <person name="Howell G.R."/>
            <person name="Huckle E."/>
            <person name="Humphray S.J."/>
            <person name="Humphries M.D."/>
            <person name="Hunt A.R."/>
            <person name="Johnson C.M."/>
            <person name="Joy A.A."/>
            <person name="Kay M."/>
            <person name="Keenan S.J."/>
            <person name="Kimberley A.M."/>
            <person name="King A."/>
            <person name="Laird G.K."/>
            <person name="Langford C."/>
            <person name="Lawlor S."/>
            <person name="Leongamornlert D.A."/>
            <person name="Leversha M."/>
            <person name="Lloyd C.R."/>
            <person name="Lloyd D.M."/>
            <person name="Loveland J.E."/>
            <person name="Lovell J."/>
            <person name="Martin S."/>
            <person name="Mashreghi-Mohammadi M."/>
            <person name="Maslen G.L."/>
            <person name="Matthews L."/>
            <person name="McCann O.T."/>
            <person name="McLaren S.J."/>
            <person name="McLay K."/>
            <person name="McMurray A."/>
            <person name="Moore M.J.F."/>
            <person name="Mullikin J.C."/>
            <person name="Niblett D."/>
            <person name="Nickerson T."/>
            <person name="Novik K.L."/>
            <person name="Oliver K."/>
            <person name="Overton-Larty E.K."/>
            <person name="Parker A."/>
            <person name="Patel R."/>
            <person name="Pearce A.V."/>
            <person name="Peck A.I."/>
            <person name="Phillimore B.J.C.T."/>
            <person name="Phillips S."/>
            <person name="Plumb R.W."/>
            <person name="Porter K.M."/>
            <person name="Ramsey Y."/>
            <person name="Ranby S.A."/>
            <person name="Rice C.M."/>
            <person name="Ross M.T."/>
            <person name="Searle S.M."/>
            <person name="Sehra H.K."/>
            <person name="Sheridan E."/>
            <person name="Skuce C.D."/>
            <person name="Smith S."/>
            <person name="Smith M."/>
            <person name="Spraggon L."/>
            <person name="Squares S.L."/>
            <person name="Steward C.A."/>
            <person name="Sycamore N."/>
            <person name="Tamlyn-Hall G."/>
            <person name="Tester J."/>
            <person name="Theaker A.J."/>
            <person name="Thomas D.W."/>
            <person name="Thorpe A."/>
            <person name="Tracey A."/>
            <person name="Tromans A."/>
            <person name="Tubby B."/>
            <person name="Wall M."/>
            <person name="Wallis J.M."/>
            <person name="West A.P."/>
            <person name="White S.S."/>
            <person name="Whitehead S.L."/>
            <person name="Whittaker H."/>
            <person name="Wild A."/>
            <person name="Willey D.J."/>
            <person name="Wilmer T.E."/>
            <person name="Wood J.M."/>
            <person name="Wray P.W."/>
            <person name="Wyatt J.C."/>
            <person name="Young L."/>
            <person name="Younger R.M."/>
            <person name="Bentley D.R."/>
            <person name="Coulson A."/>
            <person name="Durbin R.M."/>
            <person name="Hubbard T."/>
            <person name="Sulston J.E."/>
            <person name="Dunham I."/>
            <person name="Rogers J."/>
            <person name="Beck S."/>
        </authorList>
    </citation>
    <scope>NUCLEOTIDE SEQUENCE [LARGE SCALE GENOMIC DNA]</scope>
</reference>
<reference key="4">
    <citation type="journal article" date="2004" name="Genome Res.">
        <title>The status, quality, and expansion of the NIH full-length cDNA project: the Mammalian Gene Collection (MGC).</title>
        <authorList>
            <consortium name="The MGC Project Team"/>
        </authorList>
    </citation>
    <scope>NUCLEOTIDE SEQUENCE [LARGE SCALE MRNA] (ISOFORM 1)</scope>
    <source>
        <tissue>Brain</tissue>
        <tissue>Testis</tissue>
    </source>
</reference>
<reference key="5">
    <citation type="journal article" date="2008" name="J. Biol. Chem.">
        <title>Lysophospholipid acyltransferases and arachidonate recycling in human neutrophils.</title>
        <authorList>
            <person name="Gijon M.A."/>
            <person name="Riekhof W.R."/>
            <person name="Zarini S."/>
            <person name="Murphy R.C."/>
            <person name="Voelker D.R."/>
        </authorList>
    </citation>
    <scope>FUNCTION</scope>
    <scope>TISSUE SPECIFICITY</scope>
    <scope>SUBSTRATE SPECIFICITY</scope>
    <scope>CATALYTIC ACTIVITY</scope>
</reference>
<reference key="6">
    <citation type="journal article" date="2011" name="Sci. Signal.">
        <title>System-wide temporal characterization of the proteome and phosphoproteome of human embryonic stem cell differentiation.</title>
        <authorList>
            <person name="Rigbolt K.T."/>
            <person name="Prokhorova T.A."/>
            <person name="Akimov V."/>
            <person name="Henningsen J."/>
            <person name="Johansen P.T."/>
            <person name="Kratchmarova I."/>
            <person name="Kassem M."/>
            <person name="Mann M."/>
            <person name="Olsen J.V."/>
            <person name="Blagoev B."/>
        </authorList>
    </citation>
    <scope>PHOSPHORYLATION [LARGE SCALE ANALYSIS] AT SER-488</scope>
    <scope>IDENTIFICATION BY MASS SPECTROMETRY [LARGE SCALE ANALYSIS]</scope>
</reference>
<reference key="7">
    <citation type="journal article" date="2013" name="J. Proteome Res.">
        <title>Toward a comprehensive characterization of a human cancer cell phosphoproteome.</title>
        <authorList>
            <person name="Zhou H."/>
            <person name="Di Palma S."/>
            <person name="Preisinger C."/>
            <person name="Peng M."/>
            <person name="Polat A.N."/>
            <person name="Heck A.J."/>
            <person name="Mohammed S."/>
        </authorList>
    </citation>
    <scope>PHOSPHORYLATION [LARGE SCALE ANALYSIS] AT SER-488</scope>
    <scope>IDENTIFICATION BY MASS SPECTROMETRY [LARGE SCALE ANALYSIS]</scope>
    <source>
        <tissue>Erythroleukemia</tissue>
    </source>
</reference>
<feature type="chain" id="PRO_0000273018" description="Membrane-bound glycerophospholipid O-acyltransferase 1">
    <location>
        <begin position="1"/>
        <end position="495"/>
    </location>
</feature>
<feature type="transmembrane region" description="Helical" evidence="3">
    <location>
        <begin position="34"/>
        <end position="54"/>
    </location>
</feature>
<feature type="transmembrane region" description="Helical" evidence="3">
    <location>
        <begin position="70"/>
        <end position="90"/>
    </location>
</feature>
<feature type="transmembrane region" description="Helical" evidence="3">
    <location>
        <begin position="126"/>
        <end position="146"/>
    </location>
</feature>
<feature type="transmembrane region" description="Helical" evidence="3">
    <location>
        <begin position="180"/>
        <end position="200"/>
    </location>
</feature>
<feature type="transmembrane region" description="Helical" evidence="3">
    <location>
        <begin position="238"/>
        <end position="258"/>
    </location>
</feature>
<feature type="transmembrane region" description="Helical" evidence="3">
    <location>
        <begin position="297"/>
        <end position="317"/>
    </location>
</feature>
<feature type="transmembrane region" description="Helical" evidence="3">
    <location>
        <begin position="371"/>
        <end position="391"/>
    </location>
</feature>
<feature type="transmembrane region" description="Helical" evidence="3">
    <location>
        <begin position="426"/>
        <end position="446"/>
    </location>
</feature>
<feature type="transmembrane region" description="Helical" evidence="3">
    <location>
        <begin position="450"/>
        <end position="470"/>
    </location>
</feature>
<feature type="active site" evidence="1">
    <location>
        <position position="350"/>
    </location>
</feature>
<feature type="active site" evidence="1">
    <location>
        <position position="381"/>
    </location>
</feature>
<feature type="modified residue" description="Phosphoserine" evidence="8 9">
    <location>
        <position position="488"/>
    </location>
</feature>
<feature type="splice variant" id="VSP_036729" description="In isoform 2." evidence="5">
    <original>MAAEPQPSSLSYRTTGSTYLHPLSELLGIPLDQVNFVVCQLVALFAAFWFRIYLRPGTTSSDVRHAVATIFGIYFVIFCFGWYSVHLFVLVLMCYAIMVTASVSNIHRYSFFVAMGYLTICHISRIYIFHYGILTTDFSGPLMIVTQKITTLAFQVHD</original>
    <variation>MEFSLRIFL</variation>
    <location>
        <begin position="1"/>
        <end position="158"/>
    </location>
</feature>
<feature type="splice variant" id="VSP_036730" description="In isoform 3." evidence="5">
    <original>AV</original>
    <variation>HL</variation>
    <location>
        <begin position="240"/>
        <end position="241"/>
    </location>
</feature>
<feature type="splice variant" id="VSP_036731" description="In isoform 3." evidence="5">
    <location>
        <begin position="242"/>
        <end position="495"/>
    </location>
</feature>
<feature type="sequence variant" id="VAR_050025" description="In dbSNP:rs2065649.">
    <original>I</original>
    <variation>V</variation>
    <location>
        <position position="450"/>
    </location>
</feature>
<feature type="sequence conflict" description="In Ref. 2; BAG59421." evidence="6" ref="2">
    <original>E</original>
    <variation>G</variation>
    <location>
        <position position="170"/>
    </location>
</feature>
<feature type="sequence conflict" description="In Ref. 2; BAG59421." evidence="6" ref="2">
    <original>S</original>
    <variation>P</variation>
    <location>
        <position position="181"/>
    </location>
</feature>
<feature type="sequence conflict" description="In Ref. 2; BAC04264." evidence="6" ref="2">
    <original>V</original>
    <variation>I</variation>
    <location>
        <position position="438"/>
    </location>
</feature>
<dbReference type="EC" id="2.3.1.-"/>
<dbReference type="EC" id="2.3.1.23" evidence="4"/>
<dbReference type="EC" id="2.3.1.n7" evidence="2"/>
<dbReference type="EC" id="2.3.1.n6" evidence="4"/>
<dbReference type="EMBL" id="AB305043">
    <property type="protein sequence ID" value="BAF93899.1"/>
    <property type="molecule type" value="mRNA"/>
</dbReference>
<dbReference type="EMBL" id="AK093994">
    <property type="protein sequence ID" value="BAC04264.1"/>
    <property type="molecule type" value="mRNA"/>
</dbReference>
<dbReference type="EMBL" id="AK131269">
    <property type="protein sequence ID" value="BAD18447.1"/>
    <property type="molecule type" value="mRNA"/>
</dbReference>
<dbReference type="EMBL" id="AK296857">
    <property type="protein sequence ID" value="BAG59421.1"/>
    <property type="molecule type" value="mRNA"/>
</dbReference>
<dbReference type="EMBL" id="AK304748">
    <property type="protein sequence ID" value="BAG65506.1"/>
    <property type="molecule type" value="mRNA"/>
</dbReference>
<dbReference type="EMBL" id="AL008627">
    <property type="status" value="NOT_ANNOTATED_CDS"/>
    <property type="molecule type" value="Genomic_DNA"/>
</dbReference>
<dbReference type="EMBL" id="AL158198">
    <property type="status" value="NOT_ANNOTATED_CDS"/>
    <property type="molecule type" value="Genomic_DNA"/>
</dbReference>
<dbReference type="EMBL" id="AL355139">
    <property type="status" value="NOT_ANNOTATED_CDS"/>
    <property type="molecule type" value="Genomic_DNA"/>
</dbReference>
<dbReference type="EMBL" id="BC150650">
    <property type="protein sequence ID" value="AAI50651.1"/>
    <property type="molecule type" value="mRNA"/>
</dbReference>
<dbReference type="EMBL" id="BC150652">
    <property type="protein sequence ID" value="AAI50653.1"/>
    <property type="molecule type" value="mRNA"/>
</dbReference>
<dbReference type="CCDS" id="CCDS34346.1">
    <molecule id="Q6ZNC8-1"/>
</dbReference>
<dbReference type="RefSeq" id="NP_001073949.1">
    <molecule id="Q6ZNC8-1"/>
    <property type="nucleotide sequence ID" value="NM_001080480.3"/>
</dbReference>
<dbReference type="RefSeq" id="XP_011512615.1">
    <molecule id="Q6ZNC8-3"/>
    <property type="nucleotide sequence ID" value="XM_011514313.4"/>
</dbReference>
<dbReference type="RefSeq" id="XP_054210330.1">
    <molecule id="Q6ZNC8-3"/>
    <property type="nucleotide sequence ID" value="XM_054354355.1"/>
</dbReference>
<dbReference type="SMR" id="Q6ZNC8"/>
<dbReference type="BioGRID" id="127537">
    <property type="interactions" value="32"/>
</dbReference>
<dbReference type="FunCoup" id="Q6ZNC8">
    <property type="interactions" value="1445"/>
</dbReference>
<dbReference type="IntAct" id="Q6ZNC8">
    <property type="interactions" value="31"/>
</dbReference>
<dbReference type="STRING" id="9606.ENSP00000324944"/>
<dbReference type="SwissLipids" id="SLP:000000133"/>
<dbReference type="iPTMnet" id="Q6ZNC8"/>
<dbReference type="PhosphoSitePlus" id="Q6ZNC8"/>
<dbReference type="BioMuta" id="MBOAT1"/>
<dbReference type="DMDM" id="74749574"/>
<dbReference type="jPOST" id="Q6ZNC8"/>
<dbReference type="MassIVE" id="Q6ZNC8"/>
<dbReference type="PaxDb" id="9606-ENSP00000324944"/>
<dbReference type="PeptideAtlas" id="Q6ZNC8"/>
<dbReference type="ProteomicsDB" id="68012">
    <molecule id="Q6ZNC8-1"/>
</dbReference>
<dbReference type="ProteomicsDB" id="68013">
    <molecule id="Q6ZNC8-2"/>
</dbReference>
<dbReference type="ProteomicsDB" id="68014">
    <molecule id="Q6ZNC8-3"/>
</dbReference>
<dbReference type="Pumba" id="Q6ZNC8"/>
<dbReference type="Antibodypedia" id="25215">
    <property type="antibodies" value="27 antibodies from 12 providers"/>
</dbReference>
<dbReference type="DNASU" id="154141"/>
<dbReference type="Ensembl" id="ENST00000324607.8">
    <molecule id="Q6ZNC8-1"/>
    <property type="protein sequence ID" value="ENSP00000324944.7"/>
    <property type="gene ID" value="ENSG00000172197.11"/>
</dbReference>
<dbReference type="GeneID" id="154141"/>
<dbReference type="KEGG" id="hsa:154141"/>
<dbReference type="MANE-Select" id="ENST00000324607.8">
    <property type="protein sequence ID" value="ENSP00000324944.7"/>
    <property type="RefSeq nucleotide sequence ID" value="NM_001080480.3"/>
    <property type="RefSeq protein sequence ID" value="NP_001073949.1"/>
</dbReference>
<dbReference type="UCSC" id="uc003ncx.4">
    <molecule id="Q6ZNC8-1"/>
    <property type="organism name" value="human"/>
</dbReference>
<dbReference type="AGR" id="HGNC:21579"/>
<dbReference type="CTD" id="154141"/>
<dbReference type="DisGeNET" id="154141"/>
<dbReference type="GeneCards" id="MBOAT1"/>
<dbReference type="HGNC" id="HGNC:21579">
    <property type="gene designation" value="MBOAT1"/>
</dbReference>
<dbReference type="HPA" id="ENSG00000172197">
    <property type="expression patterns" value="Low tissue specificity"/>
</dbReference>
<dbReference type="MIM" id="611732">
    <property type="type" value="gene"/>
</dbReference>
<dbReference type="neXtProt" id="NX_Q6ZNC8"/>
<dbReference type="OpenTargets" id="ENSG00000172197"/>
<dbReference type="PharmGKB" id="PA134979205"/>
<dbReference type="VEuPathDB" id="HostDB:ENSG00000172197"/>
<dbReference type="eggNOG" id="KOG2704">
    <property type="taxonomic scope" value="Eukaryota"/>
</dbReference>
<dbReference type="GeneTree" id="ENSGT01030000234564"/>
<dbReference type="HOGENOM" id="CLU_011340_3_0_1"/>
<dbReference type="InParanoid" id="Q6ZNC8"/>
<dbReference type="OMA" id="WFVYINI"/>
<dbReference type="OrthoDB" id="286734at2759"/>
<dbReference type="PAN-GO" id="Q6ZNC8">
    <property type="GO annotations" value="3 GO annotations based on evolutionary models"/>
</dbReference>
<dbReference type="PhylomeDB" id="Q6ZNC8"/>
<dbReference type="TreeFam" id="TF314906"/>
<dbReference type="PathwayCommons" id="Q6ZNC8"/>
<dbReference type="Reactome" id="R-HSA-1482801">
    <property type="pathway name" value="Acyl chain remodelling of PS"/>
</dbReference>
<dbReference type="Reactome" id="R-HSA-1482839">
    <property type="pathway name" value="Acyl chain remodelling of PE"/>
</dbReference>
<dbReference type="SignaLink" id="Q6ZNC8"/>
<dbReference type="UniPathway" id="UPA00085"/>
<dbReference type="BioGRID-ORCS" id="154141">
    <property type="hits" value="19 hits in 1157 CRISPR screens"/>
</dbReference>
<dbReference type="ChiTaRS" id="MBOAT1">
    <property type="organism name" value="human"/>
</dbReference>
<dbReference type="GenomeRNAi" id="154141"/>
<dbReference type="Pharos" id="Q6ZNC8">
    <property type="development level" value="Tdark"/>
</dbReference>
<dbReference type="PRO" id="PR:Q6ZNC8"/>
<dbReference type="Proteomes" id="UP000005640">
    <property type="component" value="Chromosome 6"/>
</dbReference>
<dbReference type="RNAct" id="Q6ZNC8">
    <property type="molecule type" value="protein"/>
</dbReference>
<dbReference type="Bgee" id="ENSG00000172197">
    <property type="expression patterns" value="Expressed in oviduct epithelium and 152 other cell types or tissues"/>
</dbReference>
<dbReference type="GO" id="GO:0005789">
    <property type="term" value="C:endoplasmic reticulum membrane"/>
    <property type="evidence" value="ECO:0000250"/>
    <property type="project" value="UniProtKB"/>
</dbReference>
<dbReference type="GO" id="GO:0016020">
    <property type="term" value="C:membrane"/>
    <property type="evidence" value="ECO:0000318"/>
    <property type="project" value="GO_Central"/>
</dbReference>
<dbReference type="GO" id="GO:0003841">
    <property type="term" value="F:1-acylglycerol-3-phosphate O-acyltransferase activity"/>
    <property type="evidence" value="ECO:0000304"/>
    <property type="project" value="Reactome"/>
</dbReference>
<dbReference type="GO" id="GO:0047184">
    <property type="term" value="F:1-acylglycerophosphocholine O-acyltransferase activity"/>
    <property type="evidence" value="ECO:0007669"/>
    <property type="project" value="UniProtKB-EC"/>
</dbReference>
<dbReference type="GO" id="GO:0106262">
    <property type="term" value="F:1-acylglycerophosphoethanolamine O-acyltransferase activity"/>
    <property type="evidence" value="ECO:0000250"/>
    <property type="project" value="UniProtKB"/>
</dbReference>
<dbReference type="GO" id="GO:0106263">
    <property type="term" value="F:1-acylglycerophosphoserine O-acyltransferase activity"/>
    <property type="evidence" value="ECO:0000315"/>
    <property type="project" value="UniProtKB"/>
</dbReference>
<dbReference type="GO" id="GO:0047144">
    <property type="term" value="F:2-acylglycerol-3-phosphate O-acyltransferase activity"/>
    <property type="evidence" value="ECO:0000304"/>
    <property type="project" value="Reactome"/>
</dbReference>
<dbReference type="GO" id="GO:0016746">
    <property type="term" value="F:acyltransferase activity"/>
    <property type="evidence" value="ECO:0000318"/>
    <property type="project" value="GO_Central"/>
</dbReference>
<dbReference type="GO" id="GO:0030258">
    <property type="term" value="P:lipid modification"/>
    <property type="evidence" value="ECO:0000318"/>
    <property type="project" value="GO_Central"/>
</dbReference>
<dbReference type="GO" id="GO:0036152">
    <property type="term" value="P:phosphatidylethanolamine acyl-chain remodeling"/>
    <property type="evidence" value="ECO:0000250"/>
    <property type="project" value="UniProtKB"/>
</dbReference>
<dbReference type="GO" id="GO:0036150">
    <property type="term" value="P:phosphatidylserine acyl-chain remodeling"/>
    <property type="evidence" value="ECO:0000314"/>
    <property type="project" value="UniProtKB"/>
</dbReference>
<dbReference type="GO" id="GO:0008654">
    <property type="term" value="P:phospholipid biosynthetic process"/>
    <property type="evidence" value="ECO:0000250"/>
    <property type="project" value="UniProtKB"/>
</dbReference>
<dbReference type="GO" id="GO:0010975">
    <property type="term" value="P:regulation of neuron projection development"/>
    <property type="evidence" value="ECO:0000250"/>
    <property type="project" value="UniProtKB"/>
</dbReference>
<dbReference type="InterPro" id="IPR049941">
    <property type="entry name" value="LPLAT_7/PORCN-like"/>
</dbReference>
<dbReference type="InterPro" id="IPR004299">
    <property type="entry name" value="MBOAT_fam"/>
</dbReference>
<dbReference type="PANTHER" id="PTHR13906:SF6">
    <property type="entry name" value="LYSOPHOSPHOLIPID ACYLTRANSFERASE 1"/>
    <property type="match status" value="1"/>
</dbReference>
<dbReference type="PANTHER" id="PTHR13906">
    <property type="entry name" value="PORCUPINE"/>
    <property type="match status" value="1"/>
</dbReference>
<dbReference type="Pfam" id="PF03062">
    <property type="entry name" value="MBOAT"/>
    <property type="match status" value="1"/>
</dbReference>
<accession>Q6ZNC8</accession>
<accession>A9EDQ5</accession>
<accession>B4DL59</accession>
<accession>B4E3J4</accession>
<accession>Q86XC2</accession>
<accession>Q8N9R5</accession>
<evidence type="ECO:0000250" key="1"/>
<evidence type="ECO:0000250" key="2">
    <source>
        <dbReference type="UniProtKB" id="Q8BH98"/>
    </source>
</evidence>
<evidence type="ECO:0000255" key="3"/>
<evidence type="ECO:0000269" key="4">
    <source>
    </source>
</evidence>
<evidence type="ECO:0000303" key="5">
    <source>
    </source>
</evidence>
<evidence type="ECO:0000305" key="6"/>
<evidence type="ECO:0000312" key="7">
    <source>
        <dbReference type="HGNC" id="HGNC:21579"/>
    </source>
</evidence>
<evidence type="ECO:0007744" key="8">
    <source>
    </source>
</evidence>
<evidence type="ECO:0007744" key="9">
    <source>
    </source>
</evidence>
<sequence length="495" mass="56557">MAAEPQPSSLSYRTTGSTYLHPLSELLGIPLDQVNFVVCQLVALFAAFWFRIYLRPGTTSSDVRHAVATIFGIYFVIFCFGWYSVHLFVLVLMCYAIMVTASVSNIHRYSFFVAMGYLTICHISRIYIFHYGILTTDFSGPLMIVTQKITTLAFQVHDGLGRRAEDLSAEQHRLAIKVKPSFLEYLSYLLNFMSVIAGPCNNFKDYIAFIEGKHIHMKLLEVNWKRKGFHSLPEPSPTGAVIHKLGITLVSLLLFLTLTKTFPVTCLVDDWFVHKASFPARLCYLYVVMQASKPKYYFAWTLADAVNNAAGFGFSGVDKNGNFCWDLLSNLNIWKIETATSFKMYLENWNIQTATWLKCVCYQRVPWYPTVLTFILSALWHGVYPGYYFTFLTGILVTLAARAVRNNYRHYFLSSRALKAVYDAGTWAVTQLAVSYTVAPFVMLAVEPTISLYKSMYFYLHIISLLIILFLPMKPQAHTQRRPQTLNSINKRKTD</sequence>